<proteinExistence type="evidence at protein level"/>
<sequence>MTSLNIMGRKFILERAKRNDNIEEIYTSAYVSLPSSTDTRLPHFKAKEEDCDVYEEGTNLVGKNAKYTYRSLGRHLDFLRPGLRFGGSQSSKYTYYTVEVKIDTVNLPLYKDSRSLDPHVTGTFTIKNLTPVLDKVVTLFEGYVINYNQFPLCSLHWPAEETLDPYMAQRESDCSHWKRFGHFGSDNWSLTERNFGQYNHESAEFMNQRYIYLKWKERFLLDDEEQENLMLDDNHHLEGASFEGFYYVCLDQLTGSVEGYYYHPACELFQKLELVPTNCDALNTYSSGFEIA</sequence>
<name>GID10_YEAST</name>
<reference key="1">
    <citation type="journal article" date="2005" name="Nat. Genet.">
        <title>Quantitative trait loci mapped to single-nucleotide resolution in yeast.</title>
        <authorList>
            <person name="Deutschbauer A.M."/>
            <person name="Davis R.W."/>
        </authorList>
    </citation>
    <scope>NUCLEOTIDE SEQUENCE [GENOMIC DNA]</scope>
    <scope>VARIANT LEU-231 DEL</scope>
    <source>
        <strain>SK1</strain>
    </source>
</reference>
<reference key="2">
    <citation type="journal article" date="1997" name="Nature">
        <title>The nucleotide sequence of Saccharomyces cerevisiae chromosome VII.</title>
        <authorList>
            <person name="Tettelin H."/>
            <person name="Agostoni-Carbone M.L."/>
            <person name="Albermann K."/>
            <person name="Albers M."/>
            <person name="Arroyo J."/>
            <person name="Backes U."/>
            <person name="Barreiros T."/>
            <person name="Bertani I."/>
            <person name="Bjourson A.J."/>
            <person name="Brueckner M."/>
            <person name="Bruschi C.V."/>
            <person name="Carignani G."/>
            <person name="Castagnoli L."/>
            <person name="Cerdan E."/>
            <person name="Clemente M.L."/>
            <person name="Coblenz A."/>
            <person name="Coglievina M."/>
            <person name="Coissac E."/>
            <person name="Defoor E."/>
            <person name="Del Bino S."/>
            <person name="Delius H."/>
            <person name="Delneri D."/>
            <person name="de Wergifosse P."/>
            <person name="Dujon B."/>
            <person name="Durand P."/>
            <person name="Entian K.-D."/>
            <person name="Eraso P."/>
            <person name="Escribano V."/>
            <person name="Fabiani L."/>
            <person name="Fartmann B."/>
            <person name="Feroli F."/>
            <person name="Feuermann M."/>
            <person name="Frontali L."/>
            <person name="Garcia-Gonzalez M."/>
            <person name="Garcia-Saez M.I."/>
            <person name="Goffeau A."/>
            <person name="Guerreiro P."/>
            <person name="Hani J."/>
            <person name="Hansen M."/>
            <person name="Hebling U."/>
            <person name="Hernandez K."/>
            <person name="Heumann K."/>
            <person name="Hilger F."/>
            <person name="Hofmann B."/>
            <person name="Indge K.J."/>
            <person name="James C.M."/>
            <person name="Klima R."/>
            <person name="Koetter P."/>
            <person name="Kramer B."/>
            <person name="Kramer W."/>
            <person name="Lauquin G."/>
            <person name="Leuther H."/>
            <person name="Louis E.J."/>
            <person name="Maillier E."/>
            <person name="Marconi A."/>
            <person name="Martegani E."/>
            <person name="Mazon M.J."/>
            <person name="Mazzoni C."/>
            <person name="McReynolds A.D.K."/>
            <person name="Melchioretto P."/>
            <person name="Mewes H.-W."/>
            <person name="Minenkova O."/>
            <person name="Mueller-Auer S."/>
            <person name="Nawrocki A."/>
            <person name="Netter P."/>
            <person name="Neu R."/>
            <person name="Nombela C."/>
            <person name="Oliver S.G."/>
            <person name="Panzeri L."/>
            <person name="Paoluzi S."/>
            <person name="Plevani P."/>
            <person name="Portetelle D."/>
            <person name="Portillo F."/>
            <person name="Potier S."/>
            <person name="Purnelle B."/>
            <person name="Rieger M."/>
            <person name="Riles L."/>
            <person name="Rinaldi T."/>
            <person name="Robben J."/>
            <person name="Rodrigues-Pousada C."/>
            <person name="Rodriguez-Belmonte E."/>
            <person name="Rodriguez-Torres A.M."/>
            <person name="Rose M."/>
            <person name="Ruzzi M."/>
            <person name="Saliola M."/>
            <person name="Sanchez-Perez M."/>
            <person name="Schaefer B."/>
            <person name="Schaefer M."/>
            <person name="Scharfe M."/>
            <person name="Schmidheini T."/>
            <person name="Schreer A."/>
            <person name="Skala J."/>
            <person name="Souciet J.-L."/>
            <person name="Steensma H.Y."/>
            <person name="Talla E."/>
            <person name="Thierry A."/>
            <person name="Vandenbol M."/>
            <person name="van der Aart Q.J.M."/>
            <person name="Van Dyck L."/>
            <person name="Vanoni M."/>
            <person name="Verhasselt P."/>
            <person name="Voet M."/>
            <person name="Volckaert G."/>
            <person name="Wambutt R."/>
            <person name="Watson M.D."/>
            <person name="Weber N."/>
            <person name="Wedler E."/>
            <person name="Wedler H."/>
            <person name="Wipfli P."/>
            <person name="Wolf K."/>
            <person name="Wright L.F."/>
            <person name="Zaccaria P."/>
            <person name="Zimmermann M."/>
            <person name="Zollner A."/>
            <person name="Kleine K."/>
        </authorList>
    </citation>
    <scope>NUCLEOTIDE SEQUENCE [LARGE SCALE GENOMIC DNA]</scope>
    <source>
        <strain>ATCC 204508 / S288c</strain>
    </source>
</reference>
<reference key="3">
    <citation type="journal article" date="2014" name="G3 (Bethesda)">
        <title>The reference genome sequence of Saccharomyces cerevisiae: Then and now.</title>
        <authorList>
            <person name="Engel S.R."/>
            <person name="Dietrich F.S."/>
            <person name="Fisk D.G."/>
            <person name="Binkley G."/>
            <person name="Balakrishnan R."/>
            <person name="Costanzo M.C."/>
            <person name="Dwight S.S."/>
            <person name="Hitz B.C."/>
            <person name="Karra K."/>
            <person name="Nash R.S."/>
            <person name="Weng S."/>
            <person name="Wong E.D."/>
            <person name="Lloyd P."/>
            <person name="Skrzypek M.S."/>
            <person name="Miyasato S.R."/>
            <person name="Simison M."/>
            <person name="Cherry J.M."/>
        </authorList>
    </citation>
    <scope>GENOME REANNOTATION</scope>
    <source>
        <strain>ATCC 204508 / S288c</strain>
    </source>
</reference>
<reference key="4">
    <citation type="journal article" date="2007" name="Genome Res.">
        <title>Approaching a complete repository of sequence-verified protein-encoding clones for Saccharomyces cerevisiae.</title>
        <authorList>
            <person name="Hu Y."/>
            <person name="Rolfs A."/>
            <person name="Bhullar B."/>
            <person name="Murthy T.V.S."/>
            <person name="Zhu C."/>
            <person name="Berger M.F."/>
            <person name="Camargo A.A."/>
            <person name="Kelley F."/>
            <person name="McCarron S."/>
            <person name="Jepson D."/>
            <person name="Richardson A."/>
            <person name="Raphael J."/>
            <person name="Moreira D."/>
            <person name="Taycher E."/>
            <person name="Zuo D."/>
            <person name="Mohr S."/>
            <person name="Kane M.F."/>
            <person name="Williamson J."/>
            <person name="Simpson A.J.G."/>
            <person name="Bulyk M.L."/>
            <person name="Harlow E."/>
            <person name="Marsischky G."/>
            <person name="Kolodner R.D."/>
            <person name="LaBaer J."/>
        </authorList>
    </citation>
    <scope>NUCLEOTIDE SEQUENCE [GENOMIC DNA]</scope>
    <source>
        <strain>ATCC 204508 / S288c</strain>
    </source>
</reference>
<reference key="5">
    <citation type="journal article" date="2019" name="Proc. Natl. Acad. Sci. U.S.A.">
        <title>Gid10 as an alternative N-recognin of the Pro/N-degron pathway.</title>
        <authorList>
            <person name="Melnykov A."/>
            <person name="Chen S.J."/>
            <person name="Varshavsky A."/>
        </authorList>
    </citation>
    <scope>FUNCTION</scope>
    <scope>SUBUNIT</scope>
</reference>
<reference key="6">
    <citation type="journal article" date="2020" name="Mol. Cell">
        <title>Interconversion between anticipatory and active GID E3 ubiquitin ligase conformations via metabolically driven substrate receptor assembly.</title>
        <authorList>
            <person name="Qiao S."/>
            <person name="Langlois C.R."/>
            <person name="Chrustowicz J."/>
            <person name="Sherpa D."/>
            <person name="Karayel O."/>
            <person name="Hansen F.M."/>
            <person name="Beier V."/>
            <person name="von Gronau S."/>
            <person name="Bollschweiler D."/>
            <person name="Schafer T."/>
            <person name="Alpi A.F."/>
            <person name="Mann M."/>
            <person name="Prabu J.R."/>
            <person name="Schulman B.A."/>
        </authorList>
    </citation>
    <scope>FUNCTION</scope>
    <scope>SUBUNIT</scope>
</reference>
<reference evidence="11" key="7">
    <citation type="journal article" date="2021" name="Biochem. Biophys. Res. Commun.">
        <title>Crystal structure of yeast Gid10 in complex with Pro/N-degron.</title>
        <authorList>
            <person name="Shin J.S."/>
            <person name="Park S.H."/>
            <person name="Kim L."/>
            <person name="Heo J."/>
            <person name="Song H.K."/>
        </authorList>
    </citation>
    <scope>X-RAY CRYSTALLOGRAPHY (2.80 ANGSTROMS) OF 73-292</scope>
    <scope>FUNCTION</scope>
</reference>
<reference evidence="10" key="8">
    <citation type="journal article" date="2022" name="EMBO Rep.">
        <title>A GID E3 ligase assembly ubiquitinates an Rsp5 E3 adaptor and regulates plasma membrane transporters.</title>
        <authorList>
            <person name="Langlois C.R."/>
            <person name="Beier V."/>
            <person name="Karayel O."/>
            <person name="Chrustowicz J."/>
            <person name="Sherpa D."/>
            <person name="Mann M."/>
            <person name="Schulman B.A."/>
        </authorList>
    </citation>
    <scope>X-RAY CRYSTALLOGRAPHY (1.26 ANGSTROMS) OF 65-284</scope>
    <scope>FUNCTION</scope>
</reference>
<reference evidence="9" key="9">
    <citation type="journal article" date="2022" name="J. Mol. Biol.">
        <title>Multifaceted N-degron recognition and ubiquitylation by GID/CTLH E3 ligases.</title>
        <authorList>
            <person name="Chrustowicz J."/>
            <person name="Sherpa D."/>
            <person name="Teyra J."/>
            <person name="Loke M.S."/>
            <person name="Popowicz G.M."/>
            <person name="Basquin J."/>
            <person name="Sattler M."/>
            <person name="Prabu J.R."/>
            <person name="Sidhu S.S."/>
            <person name="Schulman B.A."/>
        </authorList>
    </citation>
    <scope>X-RAY CRYSTALLOGRAPHY (2.22 ANGSTROMS) OF 65-284</scope>
</reference>
<comment type="function">
    <text evidence="2 3 4 5">Substrate-recognition component of the GID E3 ligase complex recruiting N termini and catalyzing ubiquitination of proteins targeted for degradation. GID E3 is regulated through assembly with interchangeable N-degron-binding substrate receptors induced by distinct environmental perturbations (PubMed:31708416). Required for the adaptation to osmotic or heat stress (PubMed:31708416). Required for the regulation of protein levels of the adapter protein ART2, a component of the ART-Rsp5 ubiquitin ligase pathway, part of the plasma membrane quality control (PubMed:35437932). Specific for substrates with an N-terminal Pro (Pro/N-degron), including ART2 (PubMed:31337681, PubMed:35437932). Has high affinity for the N-terminal sequence Pro-Tyr-Ile-Thr, and also recognizes nonproline residues such as Met-Tyr-Ile-Thr-Val or Val-Cys-Phe-His (PubMed:31337681, PubMed:34695755).</text>
</comment>
<comment type="subunit">
    <text evidence="2 3 5">Substrate-recognition component of the GID/CTLH ubiquitin ligase complex (PubMed:31337681, PubMed:31708416). In the absence of stress, the complex exists as an inactive anticipatory complex (GID(Ant)), composed of VID30/GID1, the E3 ubiquitin-ligase RMD5/GID2, VID28/GID5, GID8, and the RING-like subunit FYV10/GID9, awaiting a substrate receptor to form the active E3 ligase complex. When cells are shifted to glucose-containing medium, the substrate receptor VID24/GID4 is induced and becomes part of the complex, named GID(SR4) (PubMed:31708416). Under osmotic or heat stress, the substrate receptor GID10 is induced and becomes part of the complex, named GID(SR10) (PubMed:31708416). Interacts with proteins that have an N-terminal Pro/N-degron, including ART2 (PubMed:31337681, PubMed:35437932).</text>
</comment>
<comment type="similarity">
    <text evidence="7">Belongs to the GID4/VID24 family.</text>
</comment>
<evidence type="ECO:0000269" key="1">
    <source>
    </source>
</evidence>
<evidence type="ECO:0000269" key="2">
    <source>
    </source>
</evidence>
<evidence type="ECO:0000269" key="3">
    <source>
    </source>
</evidence>
<evidence type="ECO:0000269" key="4">
    <source>
    </source>
</evidence>
<evidence type="ECO:0000269" key="5">
    <source>
    </source>
</evidence>
<evidence type="ECO:0000303" key="6">
    <source>
    </source>
</evidence>
<evidence type="ECO:0000305" key="7"/>
<evidence type="ECO:0000312" key="8">
    <source>
        <dbReference type="SGD" id="S000003298"/>
    </source>
</evidence>
<evidence type="ECO:0007744" key="9">
    <source>
        <dbReference type="PDB" id="7Q51"/>
    </source>
</evidence>
<evidence type="ECO:0007744" key="10">
    <source>
        <dbReference type="PDB" id="7QQY"/>
    </source>
</evidence>
<evidence type="ECO:0007744" key="11">
    <source>
        <dbReference type="PDB" id="7VGW"/>
    </source>
</evidence>
<evidence type="ECO:0007829" key="12">
    <source>
        <dbReference type="PDB" id="7Q51"/>
    </source>
</evidence>
<evidence type="ECO:0007829" key="13">
    <source>
        <dbReference type="PDB" id="7QQY"/>
    </source>
</evidence>
<dbReference type="EMBL" id="DQ115391">
    <property type="protein sequence ID" value="AAZ22478.1"/>
    <property type="molecule type" value="Genomic_DNA"/>
</dbReference>
<dbReference type="EMBL" id="Z72851">
    <property type="protein sequence ID" value="CAA97068.1"/>
    <property type="molecule type" value="Genomic_DNA"/>
</dbReference>
<dbReference type="EMBL" id="AY692618">
    <property type="protein sequence ID" value="AAT92637.1"/>
    <property type="molecule type" value="Genomic_DNA"/>
</dbReference>
<dbReference type="EMBL" id="BK006941">
    <property type="protein sequence ID" value="DAA08161.1"/>
    <property type="molecule type" value="Genomic_DNA"/>
</dbReference>
<dbReference type="PIR" id="S64361">
    <property type="entry name" value="S64361"/>
</dbReference>
<dbReference type="RefSeq" id="NP_011580.3">
    <property type="nucleotide sequence ID" value="NM_001181195.3"/>
</dbReference>
<dbReference type="PDB" id="7Q51">
    <property type="method" value="X-ray"/>
    <property type="resolution" value="2.22 A"/>
    <property type="chains" value="A=65-284"/>
</dbReference>
<dbReference type="PDB" id="7QQY">
    <property type="method" value="X-ray"/>
    <property type="resolution" value="1.26 A"/>
    <property type="chains" value="A=65-284"/>
</dbReference>
<dbReference type="PDB" id="7VGW">
    <property type="method" value="X-ray"/>
    <property type="resolution" value="2.80 A"/>
    <property type="chains" value="A/B=73-292"/>
</dbReference>
<dbReference type="PDBsum" id="7Q51"/>
<dbReference type="PDBsum" id="7QQY"/>
<dbReference type="PDBsum" id="7VGW"/>
<dbReference type="SMR" id="P53242"/>
<dbReference type="BioGRID" id="33310">
    <property type="interactions" value="23"/>
</dbReference>
<dbReference type="ComplexPortal" id="CPX-7884">
    <property type="entry name" value="GID E3 ubiquitin ligase complex, GID10 variant"/>
</dbReference>
<dbReference type="DIP" id="DIP-4860N"/>
<dbReference type="FunCoup" id="P53242">
    <property type="interactions" value="184"/>
</dbReference>
<dbReference type="IntAct" id="P53242">
    <property type="interactions" value="1"/>
</dbReference>
<dbReference type="STRING" id="4932.YGR066C"/>
<dbReference type="iPTMnet" id="P53242"/>
<dbReference type="PaxDb" id="4932-YGR066C"/>
<dbReference type="EnsemblFungi" id="YGR066C_mRNA">
    <property type="protein sequence ID" value="YGR066C"/>
    <property type="gene ID" value="YGR066C"/>
</dbReference>
<dbReference type="GeneID" id="852957"/>
<dbReference type="KEGG" id="sce:YGR066C"/>
<dbReference type="AGR" id="SGD:S000003298"/>
<dbReference type="SGD" id="S000003298">
    <property type="gene designation" value="GID10"/>
</dbReference>
<dbReference type="VEuPathDB" id="FungiDB:YGR066C"/>
<dbReference type="eggNOG" id="KOG4635">
    <property type="taxonomic scope" value="Eukaryota"/>
</dbReference>
<dbReference type="GeneTree" id="ENSGT00500000044930"/>
<dbReference type="HOGENOM" id="CLU_028759_3_0_1"/>
<dbReference type="InParanoid" id="P53242"/>
<dbReference type="OMA" id="GYYYHRQ"/>
<dbReference type="OrthoDB" id="62at2759"/>
<dbReference type="BioCyc" id="YEAST:G3O-30780-MONOMER"/>
<dbReference type="BioGRID-ORCS" id="852957">
    <property type="hits" value="0 hits in 10 CRISPR screens"/>
</dbReference>
<dbReference type="PRO" id="PR:P53242"/>
<dbReference type="Proteomes" id="UP000002311">
    <property type="component" value="Chromosome VII"/>
</dbReference>
<dbReference type="RNAct" id="P53242">
    <property type="molecule type" value="protein"/>
</dbReference>
<dbReference type="GO" id="GO:0034657">
    <property type="term" value="C:GID complex"/>
    <property type="evidence" value="ECO:0000314"/>
    <property type="project" value="SGD"/>
</dbReference>
<dbReference type="GO" id="GO:0005773">
    <property type="term" value="C:vacuole"/>
    <property type="evidence" value="ECO:0007669"/>
    <property type="project" value="GOC"/>
</dbReference>
<dbReference type="GO" id="GO:0045721">
    <property type="term" value="P:negative regulation of gluconeogenesis"/>
    <property type="evidence" value="ECO:0000318"/>
    <property type="project" value="GO_Central"/>
</dbReference>
<dbReference type="GO" id="GO:0043161">
    <property type="term" value="P:proteasome-mediated ubiquitin-dependent protein catabolic process"/>
    <property type="evidence" value="ECO:0000318"/>
    <property type="project" value="GO_Central"/>
</dbReference>
<dbReference type="GO" id="GO:0030163">
    <property type="term" value="P:protein catabolic process"/>
    <property type="evidence" value="ECO:0000314"/>
    <property type="project" value="SGD"/>
</dbReference>
<dbReference type="GO" id="GO:0007039">
    <property type="term" value="P:protein catabolic process in the vacuole"/>
    <property type="evidence" value="ECO:0000318"/>
    <property type="project" value="GO_Central"/>
</dbReference>
<dbReference type="GO" id="GO:0006623">
    <property type="term" value="P:protein targeting to vacuole"/>
    <property type="evidence" value="ECO:0000318"/>
    <property type="project" value="GO_Central"/>
</dbReference>
<dbReference type="GO" id="GO:0006970">
    <property type="term" value="P:response to osmotic stress"/>
    <property type="evidence" value="ECO:0000314"/>
    <property type="project" value="SGD"/>
</dbReference>
<dbReference type="GO" id="GO:0042594">
    <property type="term" value="P:response to starvation"/>
    <property type="evidence" value="ECO:0000314"/>
    <property type="project" value="SGD"/>
</dbReference>
<dbReference type="InterPro" id="IPR018618">
    <property type="entry name" value="Vacuolar_import/degrad_Vid24"/>
</dbReference>
<dbReference type="PANTHER" id="PTHR14534:SF3">
    <property type="entry name" value="GID COMPLEX SUBUNIT 4 HOMOLOG"/>
    <property type="match status" value="1"/>
</dbReference>
<dbReference type="PANTHER" id="PTHR14534">
    <property type="entry name" value="VACUOLAR IMPORT AND DEGRADATION PROTEIN 24"/>
    <property type="match status" value="1"/>
</dbReference>
<dbReference type="Pfam" id="PF09783">
    <property type="entry name" value="Vac_ImportDeg"/>
    <property type="match status" value="1"/>
</dbReference>
<accession>P53242</accession>
<accession>D6VUK0</accession>
<accession>Q45U21</accession>
<accession>Q6B2W2</accession>
<organism>
    <name type="scientific">Saccharomyces cerevisiae (strain ATCC 204508 / S288c)</name>
    <name type="common">Baker's yeast</name>
    <dbReference type="NCBI Taxonomy" id="559292"/>
    <lineage>
        <taxon>Eukaryota</taxon>
        <taxon>Fungi</taxon>
        <taxon>Dikarya</taxon>
        <taxon>Ascomycota</taxon>
        <taxon>Saccharomycotina</taxon>
        <taxon>Saccharomycetes</taxon>
        <taxon>Saccharomycetales</taxon>
        <taxon>Saccharomycetaceae</taxon>
        <taxon>Saccharomyces</taxon>
    </lineage>
</organism>
<gene>
    <name evidence="6" type="primary">GID10</name>
    <name evidence="8" type="ordered locus">YGR066C</name>
</gene>
<feature type="chain" id="PRO_0000202803" description="GID complex substrate-recognition subunit 10">
    <location>
        <begin position="1"/>
        <end position="292"/>
    </location>
</feature>
<feature type="sequence variant" description="In strain: SK1." evidence="1">
    <location>
        <position position="231"/>
    </location>
</feature>
<feature type="sequence conflict" description="In Ref. 4; AAT92637." evidence="7" ref="4">
    <original>L</original>
    <variation>Q</variation>
    <location>
        <position position="229"/>
    </location>
</feature>
<feature type="strand" evidence="13">
    <location>
        <begin position="84"/>
        <end position="90"/>
    </location>
</feature>
<feature type="strand" evidence="13">
    <location>
        <begin position="95"/>
        <end position="105"/>
    </location>
</feature>
<feature type="helix" evidence="12">
    <location>
        <begin position="113"/>
        <end position="116"/>
    </location>
</feature>
<feature type="strand" evidence="13">
    <location>
        <begin position="119"/>
        <end position="130"/>
    </location>
</feature>
<feature type="strand" evidence="13">
    <location>
        <begin position="133"/>
        <end position="144"/>
    </location>
</feature>
<feature type="strand" evidence="13">
    <location>
        <begin position="147"/>
        <end position="150"/>
    </location>
</feature>
<feature type="helix" evidence="13">
    <location>
        <begin position="154"/>
        <end position="156"/>
    </location>
</feature>
<feature type="helix" evidence="13">
    <location>
        <begin position="161"/>
        <end position="166"/>
    </location>
</feature>
<feature type="helix" evidence="13">
    <location>
        <begin position="170"/>
        <end position="179"/>
    </location>
</feature>
<feature type="strand" evidence="13">
    <location>
        <begin position="185"/>
        <end position="187"/>
    </location>
</feature>
<feature type="turn" evidence="13">
    <location>
        <begin position="193"/>
        <end position="196"/>
    </location>
</feature>
<feature type="helix" evidence="13">
    <location>
        <begin position="205"/>
        <end position="207"/>
    </location>
</feature>
<feature type="strand" evidence="13">
    <location>
        <begin position="208"/>
        <end position="221"/>
    </location>
</feature>
<feature type="helix" evidence="12">
    <location>
        <begin position="240"/>
        <end position="242"/>
    </location>
</feature>
<feature type="strand" evidence="13">
    <location>
        <begin position="245"/>
        <end position="251"/>
    </location>
</feature>
<feature type="turn" evidence="13">
    <location>
        <begin position="252"/>
        <end position="254"/>
    </location>
</feature>
<feature type="strand" evidence="13">
    <location>
        <begin position="257"/>
        <end position="262"/>
    </location>
</feature>
<feature type="strand" evidence="13">
    <location>
        <begin position="270"/>
        <end position="277"/>
    </location>
</feature>
<feature type="helix" evidence="13">
    <location>
        <begin position="279"/>
        <end position="283"/>
    </location>
</feature>
<keyword id="KW-0002">3D-structure</keyword>
<keyword id="KW-1185">Reference proteome</keyword>
<protein>
    <recommendedName>
        <fullName evidence="7">GID complex substrate-recognition subunit 10</fullName>
    </recommendedName>
    <alternativeName>
        <fullName evidence="6">Glucose-induced degradation protein 10</fullName>
    </alternativeName>
</protein>